<accession>P0DB19</accession>
<accession>Q8K8M9</accession>
<gene>
    <name type="primary">gap</name>
    <name type="synonym">gapA</name>
    <name type="synonym">plr</name>
    <name type="ordered locus">SPs0207</name>
</gene>
<evidence type="ECO:0000250" key="1"/>
<evidence type="ECO:0000250" key="2">
    <source>
        <dbReference type="UniProtKB" id="P00362"/>
    </source>
</evidence>
<evidence type="ECO:0000250" key="3">
    <source>
        <dbReference type="UniProtKB" id="P09124"/>
    </source>
</evidence>
<evidence type="ECO:0000250" key="4">
    <source>
        <dbReference type="UniProtKB" id="Q6GIL8"/>
    </source>
</evidence>
<evidence type="ECO:0000305" key="5"/>
<reference key="1">
    <citation type="journal article" date="2003" name="Genome Res.">
        <title>Genome sequence of an M3 strain of Streptococcus pyogenes reveals a large-scale genomic rearrangement in invasive strains and new insights into phage evolution.</title>
        <authorList>
            <person name="Nakagawa I."/>
            <person name="Kurokawa K."/>
            <person name="Yamashita A."/>
            <person name="Nakata M."/>
            <person name="Tomiyasu Y."/>
            <person name="Okahashi N."/>
            <person name="Kawabata S."/>
            <person name="Yamazaki K."/>
            <person name="Shiba T."/>
            <person name="Yasunaga T."/>
            <person name="Hayashi H."/>
            <person name="Hattori M."/>
            <person name="Hamada S."/>
        </authorList>
    </citation>
    <scope>NUCLEOTIDE SEQUENCE [LARGE SCALE GENOMIC DNA]</scope>
    <source>
        <strain>SSI-1</strain>
    </source>
</reference>
<feature type="initiator methionine" description="Removed" evidence="1">
    <location>
        <position position="1"/>
    </location>
</feature>
<feature type="chain" id="PRO_0000411347" description="Glyceraldehyde-3-phosphate dehydrogenase">
    <location>
        <begin position="2"/>
        <end position="336"/>
    </location>
</feature>
<feature type="active site" description="Nucleophile" evidence="2">
    <location>
        <position position="152"/>
    </location>
</feature>
<feature type="binding site" evidence="2">
    <location>
        <begin position="12"/>
        <end position="13"/>
    </location>
    <ligand>
        <name>NAD(+)</name>
        <dbReference type="ChEBI" id="CHEBI:57540"/>
    </ligand>
</feature>
<feature type="binding site" evidence="2">
    <location>
        <position position="34"/>
    </location>
    <ligand>
        <name>NAD(+)</name>
        <dbReference type="ChEBI" id="CHEBI:57540"/>
    </ligand>
</feature>
<feature type="binding site" evidence="2">
    <location>
        <position position="78"/>
    </location>
    <ligand>
        <name>NAD(+)</name>
        <dbReference type="ChEBI" id="CHEBI:57540"/>
    </ligand>
</feature>
<feature type="binding site" evidence="2">
    <location>
        <position position="121"/>
    </location>
    <ligand>
        <name>NAD(+)</name>
        <dbReference type="ChEBI" id="CHEBI:57540"/>
    </ligand>
</feature>
<feature type="binding site" evidence="2">
    <location>
        <begin position="151"/>
        <end position="153"/>
    </location>
    <ligand>
        <name>D-glyceraldehyde 3-phosphate</name>
        <dbReference type="ChEBI" id="CHEBI:59776"/>
    </ligand>
</feature>
<feature type="binding site" evidence="2">
    <location>
        <position position="182"/>
    </location>
    <ligand>
        <name>D-glyceraldehyde 3-phosphate</name>
        <dbReference type="ChEBI" id="CHEBI:59776"/>
    </ligand>
</feature>
<feature type="binding site" evidence="2">
    <location>
        <position position="199"/>
    </location>
    <ligand>
        <name>D-glyceraldehyde 3-phosphate</name>
        <dbReference type="ChEBI" id="CHEBI:59776"/>
    </ligand>
</feature>
<feature type="binding site" evidence="2">
    <location>
        <begin position="212"/>
        <end position="213"/>
    </location>
    <ligand>
        <name>D-glyceraldehyde 3-phosphate</name>
        <dbReference type="ChEBI" id="CHEBI:59776"/>
    </ligand>
</feature>
<feature type="binding site" evidence="2">
    <location>
        <position position="235"/>
    </location>
    <ligand>
        <name>D-glyceraldehyde 3-phosphate</name>
        <dbReference type="ChEBI" id="CHEBI:59776"/>
    </ligand>
</feature>
<feature type="binding site" evidence="2">
    <location>
        <position position="316"/>
    </location>
    <ligand>
        <name>NAD(+)</name>
        <dbReference type="ChEBI" id="CHEBI:57540"/>
    </ligand>
</feature>
<feature type="site" description="Activates thiol group during catalysis" evidence="4">
    <location>
        <position position="179"/>
    </location>
</feature>
<dbReference type="EC" id="1.2.1.12" evidence="3"/>
<dbReference type="EMBL" id="BA000034">
    <property type="protein sequence ID" value="BAC63302.1"/>
    <property type="molecule type" value="Genomic_DNA"/>
</dbReference>
<dbReference type="RefSeq" id="WP_011054177.1">
    <property type="nucleotide sequence ID" value="NC_004606.1"/>
</dbReference>
<dbReference type="SMR" id="P0DB19"/>
<dbReference type="KEGG" id="sps:SPs0207"/>
<dbReference type="HOGENOM" id="CLU_030140_0_3_9"/>
<dbReference type="UniPathway" id="UPA00109">
    <property type="reaction ID" value="UER00184"/>
</dbReference>
<dbReference type="GO" id="GO:0005737">
    <property type="term" value="C:cytoplasm"/>
    <property type="evidence" value="ECO:0007669"/>
    <property type="project" value="UniProtKB-SubCell"/>
</dbReference>
<dbReference type="GO" id="GO:0004365">
    <property type="term" value="F:glyceraldehyde-3-phosphate dehydrogenase (NAD+) (phosphorylating) activity"/>
    <property type="evidence" value="ECO:0000250"/>
    <property type="project" value="UniProtKB"/>
</dbReference>
<dbReference type="GO" id="GO:0051287">
    <property type="term" value="F:NAD binding"/>
    <property type="evidence" value="ECO:0000250"/>
    <property type="project" value="UniProtKB"/>
</dbReference>
<dbReference type="GO" id="GO:0050661">
    <property type="term" value="F:NADP binding"/>
    <property type="evidence" value="ECO:0007669"/>
    <property type="project" value="InterPro"/>
</dbReference>
<dbReference type="GO" id="GO:0006006">
    <property type="term" value="P:glucose metabolic process"/>
    <property type="evidence" value="ECO:0007669"/>
    <property type="project" value="InterPro"/>
</dbReference>
<dbReference type="GO" id="GO:0006096">
    <property type="term" value="P:glycolytic process"/>
    <property type="evidence" value="ECO:0007669"/>
    <property type="project" value="UniProtKB-UniPathway"/>
</dbReference>
<dbReference type="CDD" id="cd18126">
    <property type="entry name" value="GAPDH_I_C"/>
    <property type="match status" value="1"/>
</dbReference>
<dbReference type="CDD" id="cd05214">
    <property type="entry name" value="GAPDH_I_N"/>
    <property type="match status" value="1"/>
</dbReference>
<dbReference type="FunFam" id="3.30.360.10:FF:000002">
    <property type="entry name" value="Glyceraldehyde-3-phosphate dehydrogenase"/>
    <property type="match status" value="1"/>
</dbReference>
<dbReference type="FunFam" id="3.40.50.720:FF:000001">
    <property type="entry name" value="Glyceraldehyde-3-phosphate dehydrogenase"/>
    <property type="match status" value="1"/>
</dbReference>
<dbReference type="Gene3D" id="3.30.360.10">
    <property type="entry name" value="Dihydrodipicolinate Reductase, domain 2"/>
    <property type="match status" value="1"/>
</dbReference>
<dbReference type="Gene3D" id="3.40.50.720">
    <property type="entry name" value="NAD(P)-binding Rossmann-like Domain"/>
    <property type="match status" value="1"/>
</dbReference>
<dbReference type="InterPro" id="IPR020831">
    <property type="entry name" value="GlycerAld/Erythrose_P_DH"/>
</dbReference>
<dbReference type="InterPro" id="IPR020830">
    <property type="entry name" value="GlycerAld_3-P_DH_AS"/>
</dbReference>
<dbReference type="InterPro" id="IPR020829">
    <property type="entry name" value="GlycerAld_3-P_DH_cat"/>
</dbReference>
<dbReference type="InterPro" id="IPR020828">
    <property type="entry name" value="GlycerAld_3-P_DH_NAD(P)-bd"/>
</dbReference>
<dbReference type="InterPro" id="IPR006424">
    <property type="entry name" value="Glyceraldehyde-3-P_DH_1"/>
</dbReference>
<dbReference type="InterPro" id="IPR036291">
    <property type="entry name" value="NAD(P)-bd_dom_sf"/>
</dbReference>
<dbReference type="NCBIfam" id="TIGR01534">
    <property type="entry name" value="GAPDH-I"/>
    <property type="match status" value="1"/>
</dbReference>
<dbReference type="PANTHER" id="PTHR43148">
    <property type="entry name" value="GLYCERALDEHYDE-3-PHOSPHATE DEHYDROGENASE 2"/>
    <property type="match status" value="1"/>
</dbReference>
<dbReference type="Pfam" id="PF02800">
    <property type="entry name" value="Gp_dh_C"/>
    <property type="match status" value="1"/>
</dbReference>
<dbReference type="Pfam" id="PF00044">
    <property type="entry name" value="Gp_dh_N"/>
    <property type="match status" value="1"/>
</dbReference>
<dbReference type="PIRSF" id="PIRSF000149">
    <property type="entry name" value="GAP_DH"/>
    <property type="match status" value="1"/>
</dbReference>
<dbReference type="PRINTS" id="PR00078">
    <property type="entry name" value="G3PDHDRGNASE"/>
</dbReference>
<dbReference type="SMART" id="SM00846">
    <property type="entry name" value="Gp_dh_N"/>
    <property type="match status" value="1"/>
</dbReference>
<dbReference type="SUPFAM" id="SSF55347">
    <property type="entry name" value="Glyceraldehyde-3-phosphate dehydrogenase-like, C-terminal domain"/>
    <property type="match status" value="1"/>
</dbReference>
<dbReference type="SUPFAM" id="SSF51735">
    <property type="entry name" value="NAD(P)-binding Rossmann-fold domains"/>
    <property type="match status" value="1"/>
</dbReference>
<dbReference type="PROSITE" id="PS00071">
    <property type="entry name" value="GAPDH"/>
    <property type="match status" value="1"/>
</dbReference>
<organism>
    <name type="scientific">Streptococcus pyogenes serotype M3 (strain SSI-1)</name>
    <dbReference type="NCBI Taxonomy" id="193567"/>
    <lineage>
        <taxon>Bacteria</taxon>
        <taxon>Bacillati</taxon>
        <taxon>Bacillota</taxon>
        <taxon>Bacilli</taxon>
        <taxon>Lactobacillales</taxon>
        <taxon>Streptococcaceae</taxon>
        <taxon>Streptococcus</taxon>
    </lineage>
</organism>
<name>G3P_STRPQ</name>
<comment type="function">
    <text evidence="2">Catalyzes the oxidative phosphorylation of glyceraldehyde 3-phosphate (G3P) to 1,3-bisphosphoglycerate (BPG) using the cofactor NAD. The first reaction step involves the formation of a hemiacetal intermediate between G3P and a cysteine residue, and this hemiacetal intermediate is then oxidized to a thioester, with concomitant reduction of NAD to NADH. The reduced NADH is then exchanged with the second NAD, and the thioester is attacked by a nucleophilic inorganic phosphate to produce BPG. Also binds human plasminogen.</text>
</comment>
<comment type="catalytic activity">
    <reaction evidence="3">
        <text>D-glyceraldehyde 3-phosphate + phosphate + NAD(+) = (2R)-3-phospho-glyceroyl phosphate + NADH + H(+)</text>
        <dbReference type="Rhea" id="RHEA:10300"/>
        <dbReference type="ChEBI" id="CHEBI:15378"/>
        <dbReference type="ChEBI" id="CHEBI:43474"/>
        <dbReference type="ChEBI" id="CHEBI:57540"/>
        <dbReference type="ChEBI" id="CHEBI:57604"/>
        <dbReference type="ChEBI" id="CHEBI:57945"/>
        <dbReference type="ChEBI" id="CHEBI:59776"/>
        <dbReference type="EC" id="1.2.1.12"/>
    </reaction>
</comment>
<comment type="pathway">
    <text evidence="5">Carbohydrate degradation; glycolysis; pyruvate from D-glyceraldehyde 3-phosphate: step 1/5.</text>
</comment>
<comment type="subunit">
    <text evidence="2">Homotetramer.</text>
</comment>
<comment type="subcellular location">
    <subcellularLocation>
        <location evidence="5">Cytoplasm</location>
    </subcellularLocation>
</comment>
<comment type="similarity">
    <text evidence="5">Belongs to the glyceraldehyde-3-phosphate dehydrogenase family.</text>
</comment>
<protein>
    <recommendedName>
        <fullName evidence="2">Glyceraldehyde-3-phosphate dehydrogenase</fullName>
        <shortName evidence="2">GAPDH</shortName>
        <ecNumber evidence="3">1.2.1.12</ecNumber>
    </recommendedName>
    <alternativeName>
        <fullName evidence="2">NAD-dependent glyceraldehyde-3-phosphate dehydrogenase</fullName>
    </alternativeName>
</protein>
<sequence>MVVKVGINGFGRIGRLAFRRIQNIEGVEVTRINDLTDPNMLAHLLKYDTTQGRFDGTVEVKEGGFEVNGNFIKVSAERDPENIDWATDGVEIVLEATGFFAKKEAAEKHLHTNGAKKVVITAPGGNDVKTVVFNTNHDILDGTETVISGASCTTNCLAPMAKALHDAFGIQKGLMTTIHAYTGDQMILDGPHRGGDLRRARAGAANIVPNSTGAAKAIGLVIPELNGKLDGAAQRVPVPTGSVTELVVTLDKNVSVDEINAAMKAASNDSFGYTEDPIVSSDIVGVSYGSLFDATQTKVMEVDGSQLVKVVSWYDNEMSYTAQLVRTLEYFAKIAK</sequence>
<keyword id="KW-0963">Cytoplasm</keyword>
<keyword id="KW-0324">Glycolysis</keyword>
<keyword id="KW-0520">NAD</keyword>
<keyword id="KW-0547">Nucleotide-binding</keyword>
<keyword id="KW-0560">Oxidoreductase</keyword>
<proteinExistence type="inferred from homology"/>